<accession>A2BZ59</accession>
<name>RL9_PROM5</name>
<organism>
    <name type="scientific">Prochlorococcus marinus (strain MIT 9515)</name>
    <dbReference type="NCBI Taxonomy" id="167542"/>
    <lineage>
        <taxon>Bacteria</taxon>
        <taxon>Bacillati</taxon>
        <taxon>Cyanobacteriota</taxon>
        <taxon>Cyanophyceae</taxon>
        <taxon>Synechococcales</taxon>
        <taxon>Prochlorococcaceae</taxon>
        <taxon>Prochlorococcus</taxon>
    </lineage>
</organism>
<evidence type="ECO:0000255" key="1">
    <source>
        <dbReference type="HAMAP-Rule" id="MF_00503"/>
    </source>
</evidence>
<evidence type="ECO:0000305" key="2"/>
<protein>
    <recommendedName>
        <fullName evidence="1">Large ribosomal subunit protein bL9</fullName>
    </recommendedName>
    <alternativeName>
        <fullName evidence="2">50S ribosomal protein L9</fullName>
    </alternativeName>
</protein>
<dbReference type="EMBL" id="CP000552">
    <property type="protein sequence ID" value="ABM73070.1"/>
    <property type="molecule type" value="Genomic_DNA"/>
</dbReference>
<dbReference type="RefSeq" id="WP_011821154.1">
    <property type="nucleotide sequence ID" value="NC_008817.1"/>
</dbReference>
<dbReference type="SMR" id="A2BZ59"/>
<dbReference type="STRING" id="167542.P9515_18631"/>
<dbReference type="GeneID" id="60201606"/>
<dbReference type="KEGG" id="pmc:P9515_18631"/>
<dbReference type="eggNOG" id="COG0359">
    <property type="taxonomic scope" value="Bacteria"/>
</dbReference>
<dbReference type="HOGENOM" id="CLU_078938_5_1_3"/>
<dbReference type="OrthoDB" id="9788336at2"/>
<dbReference type="Proteomes" id="UP000001589">
    <property type="component" value="Chromosome"/>
</dbReference>
<dbReference type="GO" id="GO:1990904">
    <property type="term" value="C:ribonucleoprotein complex"/>
    <property type="evidence" value="ECO:0007669"/>
    <property type="project" value="UniProtKB-KW"/>
</dbReference>
<dbReference type="GO" id="GO:0005840">
    <property type="term" value="C:ribosome"/>
    <property type="evidence" value="ECO:0007669"/>
    <property type="project" value="UniProtKB-KW"/>
</dbReference>
<dbReference type="GO" id="GO:0019843">
    <property type="term" value="F:rRNA binding"/>
    <property type="evidence" value="ECO:0007669"/>
    <property type="project" value="UniProtKB-UniRule"/>
</dbReference>
<dbReference type="GO" id="GO:0003735">
    <property type="term" value="F:structural constituent of ribosome"/>
    <property type="evidence" value="ECO:0007669"/>
    <property type="project" value="InterPro"/>
</dbReference>
<dbReference type="GO" id="GO:0006412">
    <property type="term" value="P:translation"/>
    <property type="evidence" value="ECO:0007669"/>
    <property type="project" value="UniProtKB-UniRule"/>
</dbReference>
<dbReference type="Gene3D" id="3.10.430.100">
    <property type="entry name" value="Ribosomal protein L9, C-terminal domain"/>
    <property type="match status" value="1"/>
</dbReference>
<dbReference type="Gene3D" id="3.40.5.10">
    <property type="entry name" value="Ribosomal protein L9, N-terminal domain"/>
    <property type="match status" value="1"/>
</dbReference>
<dbReference type="HAMAP" id="MF_00503">
    <property type="entry name" value="Ribosomal_bL9"/>
    <property type="match status" value="1"/>
</dbReference>
<dbReference type="InterPro" id="IPR000244">
    <property type="entry name" value="Ribosomal_bL9"/>
</dbReference>
<dbReference type="InterPro" id="IPR009027">
    <property type="entry name" value="Ribosomal_bL9/RNase_H1_N"/>
</dbReference>
<dbReference type="InterPro" id="IPR020594">
    <property type="entry name" value="Ribosomal_bL9_bac/chp"/>
</dbReference>
<dbReference type="InterPro" id="IPR020069">
    <property type="entry name" value="Ribosomal_bL9_C"/>
</dbReference>
<dbReference type="InterPro" id="IPR036791">
    <property type="entry name" value="Ribosomal_bL9_C_sf"/>
</dbReference>
<dbReference type="InterPro" id="IPR020070">
    <property type="entry name" value="Ribosomal_bL9_N"/>
</dbReference>
<dbReference type="InterPro" id="IPR036935">
    <property type="entry name" value="Ribosomal_bL9_N_sf"/>
</dbReference>
<dbReference type="NCBIfam" id="TIGR00158">
    <property type="entry name" value="L9"/>
    <property type="match status" value="1"/>
</dbReference>
<dbReference type="PANTHER" id="PTHR21368">
    <property type="entry name" value="50S RIBOSOMAL PROTEIN L9"/>
    <property type="match status" value="1"/>
</dbReference>
<dbReference type="Pfam" id="PF03948">
    <property type="entry name" value="Ribosomal_L9_C"/>
    <property type="match status" value="1"/>
</dbReference>
<dbReference type="Pfam" id="PF01281">
    <property type="entry name" value="Ribosomal_L9_N"/>
    <property type="match status" value="1"/>
</dbReference>
<dbReference type="SUPFAM" id="SSF55658">
    <property type="entry name" value="L9 N-domain-like"/>
    <property type="match status" value="1"/>
</dbReference>
<dbReference type="SUPFAM" id="SSF55653">
    <property type="entry name" value="Ribosomal protein L9 C-domain"/>
    <property type="match status" value="1"/>
</dbReference>
<dbReference type="PROSITE" id="PS00651">
    <property type="entry name" value="RIBOSOMAL_L9"/>
    <property type="match status" value="1"/>
</dbReference>
<proteinExistence type="inferred from homology"/>
<reference key="1">
    <citation type="journal article" date="2007" name="PLoS Genet.">
        <title>Patterns and implications of gene gain and loss in the evolution of Prochlorococcus.</title>
        <authorList>
            <person name="Kettler G.C."/>
            <person name="Martiny A.C."/>
            <person name="Huang K."/>
            <person name="Zucker J."/>
            <person name="Coleman M.L."/>
            <person name="Rodrigue S."/>
            <person name="Chen F."/>
            <person name="Lapidus A."/>
            <person name="Ferriera S."/>
            <person name="Johnson J."/>
            <person name="Steglich C."/>
            <person name="Church G.M."/>
            <person name="Richardson P."/>
            <person name="Chisholm S.W."/>
        </authorList>
    </citation>
    <scope>NUCLEOTIDE SEQUENCE [LARGE SCALE GENOMIC DNA]</scope>
    <source>
        <strain>MIT 9515</strain>
    </source>
</reference>
<feature type="chain" id="PRO_1000014833" description="Large ribosomal subunit protein bL9">
    <location>
        <begin position="1"/>
        <end position="151"/>
    </location>
</feature>
<comment type="function">
    <text evidence="1">Binds to the 23S rRNA.</text>
</comment>
<comment type="similarity">
    <text evidence="1">Belongs to the bacterial ribosomal protein bL9 family.</text>
</comment>
<keyword id="KW-0687">Ribonucleoprotein</keyword>
<keyword id="KW-0689">Ribosomal protein</keyword>
<keyword id="KW-0694">RNA-binding</keyword>
<keyword id="KW-0699">rRNA-binding</keyword>
<sequence>MAKRVKVVLTESIATLGRDGDVVEVAPGYARNYLLPFGKASNVTPSILKQIERKRAKEKIAAEKLKQEAIDFKTALTTIGRFTIKKQVGEDGVLFGTVTNGDVAEAIQSATKKDIDRRDITVPDIHNLGSFVAKIKLHQEVSAEVNIEVTS</sequence>
<gene>
    <name evidence="1" type="primary">rplI</name>
    <name evidence="1" type="synonym">rpl9</name>
    <name type="ordered locus">P9515_18631</name>
</gene>